<proteinExistence type="inferred from homology"/>
<gene>
    <name evidence="1" type="primary">hflD</name>
    <name type="ordered locus">SbBS512_E1310</name>
</gene>
<sequence length="213" mass="22917">MAKNYYDITLALAGICQSARLVQQLAHQGHCDADALHVSLNSIIDMNPSSTLAVFGGSEANLRVGLETLLGVLNASSRQGLNAELTRYTLSLMVLERKLSSAKGALDTLGNRINGLQRQLEHFDLQSETLMSAMAAIYVDVISPLGPRIQVTGSPAVLQSPQVPAKVRATLLAGIRAAVLWHQVGGGRLQLMFSRNRLTTQAKQILAHLTPEL</sequence>
<organism>
    <name type="scientific">Shigella boydii serotype 18 (strain CDC 3083-94 / BS512)</name>
    <dbReference type="NCBI Taxonomy" id="344609"/>
    <lineage>
        <taxon>Bacteria</taxon>
        <taxon>Pseudomonadati</taxon>
        <taxon>Pseudomonadota</taxon>
        <taxon>Gammaproteobacteria</taxon>
        <taxon>Enterobacterales</taxon>
        <taxon>Enterobacteriaceae</taxon>
        <taxon>Shigella</taxon>
    </lineage>
</organism>
<evidence type="ECO:0000255" key="1">
    <source>
        <dbReference type="HAMAP-Rule" id="MF_00695"/>
    </source>
</evidence>
<name>HFLD_SHIB3</name>
<keyword id="KW-0997">Cell inner membrane</keyword>
<keyword id="KW-1003">Cell membrane</keyword>
<keyword id="KW-0175">Coiled coil</keyword>
<keyword id="KW-0963">Cytoplasm</keyword>
<keyword id="KW-0472">Membrane</keyword>
<keyword id="KW-1185">Reference proteome</keyword>
<accession>B2TZ85</accession>
<protein>
    <recommendedName>
        <fullName evidence="1">High frequency lysogenization protein HflD homolog</fullName>
    </recommendedName>
</protein>
<comment type="subcellular location">
    <subcellularLocation>
        <location>Cytoplasm</location>
    </subcellularLocation>
    <subcellularLocation>
        <location evidence="1">Cell inner membrane</location>
        <topology evidence="1">Peripheral membrane protein</topology>
        <orientation evidence="1">Cytoplasmic side</orientation>
    </subcellularLocation>
</comment>
<comment type="similarity">
    <text evidence="1">Belongs to the HflD family.</text>
</comment>
<reference key="1">
    <citation type="submission" date="2008-05" db="EMBL/GenBank/DDBJ databases">
        <title>Complete sequence of Shigella boydii serotype 18 strain BS512.</title>
        <authorList>
            <person name="Rasko D.A."/>
            <person name="Rosovitz M."/>
            <person name="Maurelli A.T."/>
            <person name="Myers G."/>
            <person name="Seshadri R."/>
            <person name="Cer R."/>
            <person name="Jiang L."/>
            <person name="Ravel J."/>
            <person name="Sebastian Y."/>
        </authorList>
    </citation>
    <scope>NUCLEOTIDE SEQUENCE [LARGE SCALE GENOMIC DNA]</scope>
    <source>
        <strain>CDC 3083-94 / BS512</strain>
    </source>
</reference>
<feature type="chain" id="PRO_1000132304" description="High frequency lysogenization protein HflD homolog">
    <location>
        <begin position="1"/>
        <end position="213"/>
    </location>
</feature>
<feature type="coiled-coil region" evidence="1">
    <location>
        <begin position="79"/>
        <end position="126"/>
    </location>
</feature>
<dbReference type="EMBL" id="CP001063">
    <property type="protein sequence ID" value="ACD09909.1"/>
    <property type="molecule type" value="Genomic_DNA"/>
</dbReference>
<dbReference type="RefSeq" id="WP_004984576.1">
    <property type="nucleotide sequence ID" value="NC_010658.1"/>
</dbReference>
<dbReference type="SMR" id="B2TZ85"/>
<dbReference type="STRING" id="344609.SbBS512_E1310"/>
<dbReference type="KEGG" id="sbc:SbBS512_E1310"/>
<dbReference type="HOGENOM" id="CLU_098920_0_0_6"/>
<dbReference type="Proteomes" id="UP000001030">
    <property type="component" value="Chromosome"/>
</dbReference>
<dbReference type="GO" id="GO:0005737">
    <property type="term" value="C:cytoplasm"/>
    <property type="evidence" value="ECO:0007669"/>
    <property type="project" value="UniProtKB-SubCell"/>
</dbReference>
<dbReference type="GO" id="GO:0005886">
    <property type="term" value="C:plasma membrane"/>
    <property type="evidence" value="ECO:0007669"/>
    <property type="project" value="UniProtKB-SubCell"/>
</dbReference>
<dbReference type="FunFam" id="1.10.3890.10:FF:000001">
    <property type="entry name" value="High frequency lysogenization protein HflD homolog"/>
    <property type="match status" value="1"/>
</dbReference>
<dbReference type="Gene3D" id="1.10.3890.10">
    <property type="entry name" value="HflD-like"/>
    <property type="match status" value="1"/>
</dbReference>
<dbReference type="HAMAP" id="MF_00695">
    <property type="entry name" value="HflD_protein"/>
    <property type="match status" value="1"/>
</dbReference>
<dbReference type="InterPro" id="IPR007451">
    <property type="entry name" value="HflD"/>
</dbReference>
<dbReference type="InterPro" id="IPR035932">
    <property type="entry name" value="HflD-like_sf"/>
</dbReference>
<dbReference type="NCBIfam" id="NF001245">
    <property type="entry name" value="PRK00218.1-1"/>
    <property type="match status" value="1"/>
</dbReference>
<dbReference type="NCBIfam" id="NF001246">
    <property type="entry name" value="PRK00218.1-2"/>
    <property type="match status" value="1"/>
</dbReference>
<dbReference type="NCBIfam" id="NF001248">
    <property type="entry name" value="PRK00218.1-4"/>
    <property type="match status" value="1"/>
</dbReference>
<dbReference type="NCBIfam" id="NF001249">
    <property type="entry name" value="PRK00218.1-5"/>
    <property type="match status" value="1"/>
</dbReference>
<dbReference type="PANTHER" id="PTHR38100">
    <property type="entry name" value="HIGH FREQUENCY LYSOGENIZATION PROTEIN HFLD"/>
    <property type="match status" value="1"/>
</dbReference>
<dbReference type="PANTHER" id="PTHR38100:SF1">
    <property type="entry name" value="HIGH FREQUENCY LYSOGENIZATION PROTEIN HFLD"/>
    <property type="match status" value="1"/>
</dbReference>
<dbReference type="Pfam" id="PF04356">
    <property type="entry name" value="DUF489"/>
    <property type="match status" value="1"/>
</dbReference>
<dbReference type="SUPFAM" id="SSF101322">
    <property type="entry name" value="YcfC-like"/>
    <property type="match status" value="1"/>
</dbReference>